<comment type="function">
    <text evidence="1">Matrix protein p17 targets Gag and Gag-Pol polyproteins to the plasma membrane via a multipartite membrane binding signal, that includes its myristoylated N-terminus. Also mediates nuclear localization of the preintegration complex. Implicated in the release from host cell mediated by Vpu (By similarity).</text>
</comment>
<comment type="function">
    <text evidence="1">Capsid protein p24 forms the conical core of the virus that encapsulates the genomic RNA-nucleocapsid complex.</text>
</comment>
<comment type="function">
    <text evidence="1">Nucleocapsid protein p7 encapsulates and protects viral dimeric unspliced (genomic) RNA. Binds these RNAs through its zinc fingers (By similarity).</text>
</comment>
<comment type="function">
    <text evidence="1">p6-gag plays a role in budding of the assembled particle by interacting with the host class E VPS proteins TSG101 and PDCD6IP/AIP1.</text>
</comment>
<comment type="subunit">
    <molecule>Matrix protein p17</molecule>
    <text evidence="2 4">Homotrimer. Interacts with gp41 (via C-terminus).</text>
</comment>
<comment type="subunit">
    <molecule>p6-gag</molecule>
    <text evidence="4">Interacts with host TSG101 (By similarity).</text>
</comment>
<comment type="subcellular location">
    <molecule>Matrix protein p17</molecule>
    <subcellularLocation>
        <location evidence="6">Virion</location>
    </subcellularLocation>
    <subcellularLocation>
        <location evidence="1">Host nucleus</location>
    </subcellularLocation>
    <subcellularLocation>
        <location evidence="1">Host cytoplasm</location>
    </subcellularLocation>
    <subcellularLocation>
        <location evidence="6">Host cell membrane</location>
        <topology evidence="6">Lipid-anchor</topology>
    </subcellularLocation>
    <text evidence="1">Following virus entry, the nuclear localization signal (NLS) of the matrix protein participates with Vpr to the nuclear localization of the viral genome. During virus production, the nuclear export activity of the matrix protein counteracts the NLS to maintain the Gag and Gag-Pol polyproteins in the cytoplasm, thereby directing unspliced RNA to the plasma membrane (By similarity).</text>
</comment>
<comment type="subcellular location">
    <molecule>Capsid protein p24</molecule>
    <subcellularLocation>
        <location evidence="6">Virion</location>
    </subcellularLocation>
</comment>
<comment type="subcellular location">
    <molecule>Nucleocapsid protein p7</molecule>
    <subcellularLocation>
        <location evidence="6">Virion</location>
    </subcellularLocation>
</comment>
<comment type="alternative products">
    <event type="ribosomal frameshifting"/>
    <isoform>
        <id>P19504-1</id>
        <name>Gag polyprotein</name>
        <sequence type="displayed"/>
    </isoform>
    <isoform>
        <id>P19505-1</id>
        <name>Gag-Pol polyprotein</name>
        <sequence type="external"/>
    </isoform>
    <text>Translation results in the formation of the Gag polyprotein most of the time. Ribosomal frameshifting at the gag-pol genes boundary occurs at low frequency and produces the Gag-Pol polyprotein. This strategy of translation probably allows the virus to modulate the quantity of each viral protein. Maintenance of a correct Gag to Gag-Pol ratio is essential for RNA dimerization and viral infectivity.</text>
</comment>
<comment type="domain">
    <text evidence="3">Late-budding domains (L domains) are short sequence motifs essential for viral particle budding. They recruit proteins of the host ESCRT machinery (Endosomal Sorting Complex Required for Transport) or ESCRT-associated proteins. p6-gag contains two L domains: a PTAP/PSAP motif, which interacts with the UEV domain of TSG101 and an ALIX binding motif.</text>
</comment>
<comment type="PTM">
    <text evidence="1">Capsid protein p24 is phosphorylated.</text>
</comment>
<comment type="PTM">
    <text evidence="1">Specific enzymatic cleavages by the viral protease yield mature proteins. The polyprotein is cleaved during and after budding, this process is termed maturation (By similarity).</text>
</comment>
<comment type="miscellaneous">
    <molecule>Isoform Gag polyprotein</molecule>
    <text>Produced by conventional translation.</text>
</comment>
<comment type="similarity">
    <text evidence="6">Belongs to the primate lentivirus group gag polyprotein family.</text>
</comment>
<evidence type="ECO:0000250" key="1"/>
<evidence type="ECO:0000250" key="2">
    <source>
        <dbReference type="UniProtKB" id="P04591"/>
    </source>
</evidence>
<evidence type="ECO:0000250" key="3">
    <source>
        <dbReference type="UniProtKB" id="P05893"/>
    </source>
</evidence>
<evidence type="ECO:0000250" key="4">
    <source>
        <dbReference type="UniProtKB" id="P12493"/>
    </source>
</evidence>
<evidence type="ECO:0000255" key="5">
    <source>
        <dbReference type="PROSITE-ProRule" id="PRU00047"/>
    </source>
</evidence>
<evidence type="ECO:0000305" key="6"/>
<reference key="1">
    <citation type="journal article" date="1990" name="Nature">
        <title>Sequence analysis and acute pathogenicity of molecularly cloned SIVSMM-PBj14.</title>
        <authorList>
            <person name="Dewhurst S."/>
            <person name="Embretson J.E."/>
            <person name="Anderson D.C."/>
            <person name="Mullins J.I."/>
            <person name="Fultz P.N."/>
        </authorList>
    </citation>
    <scope>NUCLEOTIDE SEQUENCE [GENOMIC RNA]</scope>
</reference>
<reference key="2">
    <citation type="journal article" date="1992" name="AIDS Res. Hum. Retroviruses">
        <title>Molecular clones from a non-acutely pathogenic derivative of SIVsmmPBj14: characterization and comparison to acutely pathogenic clones.</title>
        <authorList>
            <person name="Dewhurst S."/>
            <person name="Embretson J.E."/>
            <person name="Fultz P.N."/>
            <person name="Mullins J.I."/>
        </authorList>
    </citation>
    <scope>NUCLEOTIDE SEQUENCE [GENOMIC RNA]</scope>
</reference>
<feature type="initiator methionine" description="Removed; by host" evidence="1">
    <location>
        <position position="1"/>
    </location>
</feature>
<feature type="chain" id="PRO_0000316145" description="Gag polyprotein" evidence="1">
    <location>
        <begin position="2"/>
        <end position="507"/>
    </location>
</feature>
<feature type="chain" id="PRO_0000038642" description="Matrix protein p17" evidence="1">
    <location>
        <begin position="2"/>
        <end position="135"/>
    </location>
</feature>
<feature type="chain" id="PRO_0000038643" description="Capsid protein p24" evidence="1">
    <location>
        <begin position="136"/>
        <end position="365"/>
    </location>
</feature>
<feature type="peptide" id="PRO_0000316146" description="Spacer peptide p2" evidence="1">
    <location>
        <begin position="366"/>
        <end position="380"/>
    </location>
</feature>
<feature type="chain" id="PRO_0000316147" description="Nucleocapsid protein p7" evidence="1">
    <location>
        <begin position="381"/>
        <end position="434"/>
    </location>
</feature>
<feature type="peptide" id="PRO_0000316148" description="Spacer peptide p1" evidence="1">
    <location>
        <begin position="435"/>
        <end position="448"/>
    </location>
</feature>
<feature type="chain" id="PRO_0000316149" description="p6-gag" evidence="1">
    <location>
        <begin position="449"/>
        <end position="507"/>
    </location>
</feature>
<feature type="zinc finger region" description="CCHC-type 1" evidence="5">
    <location>
        <begin position="392"/>
        <end position="409"/>
    </location>
</feature>
<feature type="zinc finger region" description="CCHC-type 2" evidence="5">
    <location>
        <begin position="413"/>
        <end position="430"/>
    </location>
</feature>
<feature type="region of interest" description="Interaction with host ALIX" evidence="3">
    <location>
        <begin position="486"/>
        <end position="499"/>
    </location>
</feature>
<feature type="short sequence motif" description="Nuclear export signal" evidence="1">
    <location>
        <begin position="16"/>
        <end position="22"/>
    </location>
</feature>
<feature type="short sequence motif" description="Nuclear localization signal" evidence="1">
    <location>
        <begin position="26"/>
        <end position="32"/>
    </location>
</feature>
<feature type="short sequence motif" description="PTAP/PSAP motif" evidence="3">
    <location>
        <begin position="459"/>
        <end position="462"/>
    </location>
</feature>
<feature type="site" description="Cleavage; by viral protease" evidence="1">
    <location>
        <begin position="135"/>
        <end position="136"/>
    </location>
</feature>
<feature type="site" description="Cleavage; by viral protease" evidence="1">
    <location>
        <begin position="448"/>
        <end position="449"/>
    </location>
</feature>
<feature type="lipid moiety-binding region" description="N-myristoyl glycine; by host" evidence="1">
    <location>
        <position position="2"/>
    </location>
</feature>
<gene>
    <name type="primary">gag</name>
</gene>
<keyword id="KW-0167">Capsid protein</keyword>
<keyword id="KW-1032">Host cell membrane</keyword>
<keyword id="KW-1035">Host cytoplasm</keyword>
<keyword id="KW-1043">Host membrane</keyword>
<keyword id="KW-1048">Host nucleus</keyword>
<keyword id="KW-0945">Host-virus interaction</keyword>
<keyword id="KW-0449">Lipoprotein</keyword>
<keyword id="KW-0472">Membrane</keyword>
<keyword id="KW-0479">Metal-binding</keyword>
<keyword id="KW-0519">Myristate</keyword>
<keyword id="KW-0597">Phosphoprotein</keyword>
<keyword id="KW-0677">Repeat</keyword>
<keyword id="KW-0688">Ribosomal frameshifting</keyword>
<keyword id="KW-0694">RNA-binding</keyword>
<keyword id="KW-1198">Viral budding</keyword>
<keyword id="KW-1187">Viral budding via the host ESCRT complexes</keyword>
<keyword id="KW-0543">Viral nucleoprotein</keyword>
<keyword id="KW-1188">Viral release from host cell</keyword>
<keyword id="KW-0946">Virion</keyword>
<keyword id="KW-0862">Zinc</keyword>
<keyword id="KW-0863">Zinc-finger</keyword>
<organismHost>
    <name type="scientific">Cercopithecidae</name>
    <name type="common">Old World monkeys</name>
    <dbReference type="NCBI Taxonomy" id="9527"/>
</organismHost>
<sequence length="507" mass="56667">MGARNSVLSGKKADELEKIRLRPGGKKRYQLKHIVWAANELDRFGLAESLLENKEGCQKILSVLAPLVPTGSENLKSLYNTVCVLWCIHAEEKVKHTEEAKQIVQRHLVVETGTADKMPATSRPTAPPSGKGGNYPVQQIGGNYTHLPLSPRTLNAWVKLIEEKKFGAEVVPGFQALSEGCTPYDINQMLNCVGEHQAAMQIIREIINEEAADWDLQHPQPGPIPPGQLREPRGSDIAGTTSTVDEQIQWMYRQQNPIPVGNIYRRWIQLGLQKCVRMYNPTNILDVKQGPKEPFQSYVDRFYKSLRAEQTDPAVKNWMTQTLLIQNANPDCKLVLKGLGINPTLEEMLTACQGVGGPGQKARLMAEALKDALTQGPLPFAAVQQKGQRKIIKCWNCGKEGHSARQCRAPRRQGCWKCGKAGHVMAKCPERQAGFLGLGPWGKKPRNFPMAQMPQGLTPTAPPEDPAVDLLKNYMKMGRRQRENRERPYKEVTEDLLHLNSLFGEDQ</sequence>
<name>GAG_SIVSP</name>
<proteinExistence type="inferred from homology"/>
<dbReference type="EMBL" id="M31325">
    <property type="protein sequence ID" value="AAA47752.1"/>
    <property type="molecule type" value="Genomic_RNA"/>
</dbReference>
<dbReference type="SMR" id="P19504"/>
<dbReference type="PRO" id="PR:P19504"/>
<dbReference type="Proteomes" id="UP000007221">
    <property type="component" value="Segment"/>
</dbReference>
<dbReference type="GO" id="GO:0030430">
    <property type="term" value="C:host cell cytoplasm"/>
    <property type="evidence" value="ECO:0007669"/>
    <property type="project" value="UniProtKB-SubCell"/>
</dbReference>
<dbReference type="GO" id="GO:0042025">
    <property type="term" value="C:host cell nucleus"/>
    <property type="evidence" value="ECO:0007669"/>
    <property type="project" value="UniProtKB-SubCell"/>
</dbReference>
<dbReference type="GO" id="GO:0020002">
    <property type="term" value="C:host cell plasma membrane"/>
    <property type="evidence" value="ECO:0007669"/>
    <property type="project" value="UniProtKB-SubCell"/>
</dbReference>
<dbReference type="GO" id="GO:0016020">
    <property type="term" value="C:membrane"/>
    <property type="evidence" value="ECO:0007669"/>
    <property type="project" value="UniProtKB-KW"/>
</dbReference>
<dbReference type="GO" id="GO:0019013">
    <property type="term" value="C:viral nucleocapsid"/>
    <property type="evidence" value="ECO:0007669"/>
    <property type="project" value="UniProtKB-KW"/>
</dbReference>
<dbReference type="GO" id="GO:0003723">
    <property type="term" value="F:RNA binding"/>
    <property type="evidence" value="ECO:0007669"/>
    <property type="project" value="UniProtKB-KW"/>
</dbReference>
<dbReference type="GO" id="GO:0005198">
    <property type="term" value="F:structural molecule activity"/>
    <property type="evidence" value="ECO:0007669"/>
    <property type="project" value="InterPro"/>
</dbReference>
<dbReference type="GO" id="GO:0008270">
    <property type="term" value="F:zinc ion binding"/>
    <property type="evidence" value="ECO:0007669"/>
    <property type="project" value="UniProtKB-KW"/>
</dbReference>
<dbReference type="GO" id="GO:0039702">
    <property type="term" value="P:viral budding via host ESCRT complex"/>
    <property type="evidence" value="ECO:0007669"/>
    <property type="project" value="UniProtKB-KW"/>
</dbReference>
<dbReference type="GO" id="GO:0075523">
    <property type="term" value="P:viral translational frameshifting"/>
    <property type="evidence" value="ECO:0007669"/>
    <property type="project" value="UniProtKB-KW"/>
</dbReference>
<dbReference type="Gene3D" id="1.10.1200.30">
    <property type="match status" value="1"/>
</dbReference>
<dbReference type="Gene3D" id="1.10.375.10">
    <property type="entry name" value="Human Immunodeficiency Virus Type 1 Capsid Protein"/>
    <property type="match status" value="1"/>
</dbReference>
<dbReference type="Gene3D" id="1.10.150.90">
    <property type="entry name" value="Immunodeficiency lentiviruses, gag gene matrix protein p17"/>
    <property type="match status" value="1"/>
</dbReference>
<dbReference type="Gene3D" id="1.20.5.760">
    <property type="entry name" value="Single helix bin"/>
    <property type="match status" value="1"/>
</dbReference>
<dbReference type="Gene3D" id="4.10.60.10">
    <property type="entry name" value="Zinc finger, CCHC-type"/>
    <property type="match status" value="1"/>
</dbReference>
<dbReference type="InterPro" id="IPR045345">
    <property type="entry name" value="Gag_p24_C"/>
</dbReference>
<dbReference type="InterPro" id="IPR000071">
    <property type="entry name" value="Lentvrl_matrix_N"/>
</dbReference>
<dbReference type="InterPro" id="IPR012344">
    <property type="entry name" value="Matrix_HIV/RSV_N"/>
</dbReference>
<dbReference type="InterPro" id="IPR050195">
    <property type="entry name" value="Primate_lentivir_Gag_pol-like"/>
</dbReference>
<dbReference type="InterPro" id="IPR008916">
    <property type="entry name" value="Retrov_capsid_C"/>
</dbReference>
<dbReference type="InterPro" id="IPR008919">
    <property type="entry name" value="Retrov_capsid_N"/>
</dbReference>
<dbReference type="InterPro" id="IPR010999">
    <property type="entry name" value="Retrovr_matrix"/>
</dbReference>
<dbReference type="InterPro" id="IPR001878">
    <property type="entry name" value="Znf_CCHC"/>
</dbReference>
<dbReference type="InterPro" id="IPR036875">
    <property type="entry name" value="Znf_CCHC_sf"/>
</dbReference>
<dbReference type="PANTHER" id="PTHR40389:SF4">
    <property type="match status" value="1"/>
</dbReference>
<dbReference type="PANTHER" id="PTHR40389">
    <property type="entry name" value="ENDOGENOUS RETROVIRUS GROUP K MEMBER 24 GAG POLYPROTEIN-RELATED"/>
    <property type="match status" value="1"/>
</dbReference>
<dbReference type="Pfam" id="PF00540">
    <property type="entry name" value="Gag_p17"/>
    <property type="match status" value="1"/>
</dbReference>
<dbReference type="Pfam" id="PF00607">
    <property type="entry name" value="Gag_p24"/>
    <property type="match status" value="1"/>
</dbReference>
<dbReference type="Pfam" id="PF19317">
    <property type="entry name" value="Gag_p24_C"/>
    <property type="match status" value="1"/>
</dbReference>
<dbReference type="Pfam" id="PF00098">
    <property type="entry name" value="zf-CCHC"/>
    <property type="match status" value="2"/>
</dbReference>
<dbReference type="PRINTS" id="PR00234">
    <property type="entry name" value="HIV1MATRIX"/>
</dbReference>
<dbReference type="SMART" id="SM00343">
    <property type="entry name" value="ZnF_C2HC"/>
    <property type="match status" value="2"/>
</dbReference>
<dbReference type="SUPFAM" id="SSF47836">
    <property type="entry name" value="Retroviral matrix proteins"/>
    <property type="match status" value="1"/>
</dbReference>
<dbReference type="SUPFAM" id="SSF47353">
    <property type="entry name" value="Retrovirus capsid dimerization domain-like"/>
    <property type="match status" value="1"/>
</dbReference>
<dbReference type="SUPFAM" id="SSF47943">
    <property type="entry name" value="Retrovirus capsid protein, N-terminal core domain"/>
    <property type="match status" value="1"/>
</dbReference>
<dbReference type="SUPFAM" id="SSF57756">
    <property type="entry name" value="Retrovirus zinc finger-like domains"/>
    <property type="match status" value="1"/>
</dbReference>
<dbReference type="PROSITE" id="PS50158">
    <property type="entry name" value="ZF_CCHC"/>
    <property type="match status" value="2"/>
</dbReference>
<protein>
    <recommendedName>
        <fullName>Gag polyprotein</fullName>
    </recommendedName>
    <alternativeName>
        <fullName>Pr55Gag</fullName>
    </alternativeName>
    <component>
        <recommendedName>
            <fullName>Matrix protein p17</fullName>
            <shortName>MA</shortName>
        </recommendedName>
    </component>
    <component>
        <recommendedName>
            <fullName>Capsid protein p24</fullName>
            <shortName>CA</shortName>
        </recommendedName>
    </component>
    <component>
        <recommendedName>
            <fullName>Spacer peptide p2</fullName>
        </recommendedName>
    </component>
    <component>
        <recommendedName>
            <fullName>Nucleocapsid protein p7</fullName>
            <shortName>NC</shortName>
        </recommendedName>
    </component>
    <component>
        <recommendedName>
            <fullName>Spacer peptide p1</fullName>
        </recommendedName>
    </component>
    <component>
        <recommendedName>
            <fullName>p6-gag</fullName>
        </recommendedName>
    </component>
</protein>
<accession>P19504</accession>
<organism>
    <name type="scientific">Simian immunodeficiency virus (isolate PBj14/BCL-3)</name>
    <name type="common">SIV-sm</name>
    <name type="synonym">Simian immunodeficiency virus sooty mangabey monkey</name>
    <dbReference type="NCBI Taxonomy" id="11738"/>
    <lineage>
        <taxon>Viruses</taxon>
        <taxon>Riboviria</taxon>
        <taxon>Pararnavirae</taxon>
        <taxon>Artverviricota</taxon>
        <taxon>Revtraviricetes</taxon>
        <taxon>Ortervirales</taxon>
        <taxon>Retroviridae</taxon>
        <taxon>Orthoretrovirinae</taxon>
        <taxon>Lentivirus</taxon>
        <taxon>Simian immunodeficiency virus</taxon>
    </lineage>
</organism>